<proteinExistence type="evidence at protein level"/>
<protein>
    <recommendedName>
        <fullName>Alkyldihydroxyacetonephosphate synthase, peroxisomal</fullName>
        <shortName>Alkyl-DHAP synthase</shortName>
        <ecNumber evidence="7 8">2.5.1.26</ecNumber>
    </recommendedName>
    <alternativeName>
        <fullName>Alkylglycerone-phosphate synthase</fullName>
    </alternativeName>
</protein>
<reference key="1">
    <citation type="submission" date="1999-01" db="EMBL/GenBank/DDBJ databases">
        <title>Cloning of rat alkyl-dihydroxyacetonephosphate synthase.</title>
        <authorList>
            <person name="Gondcaille C."/>
            <person name="Bugaut M."/>
        </authorList>
    </citation>
    <scope>NUCLEOTIDE SEQUENCE [MRNA]</scope>
</reference>
<reference key="2">
    <citation type="journal article" date="1990" name="Biol. Chem. Hoppe-Seyler">
        <title>Kinetic studies of alkyl-dihydroxyacetone-phosphate (alkyl-glycerone-phosphate) synthase in peroxisomes of rat liver.</title>
        <authorList>
            <person name="Gunawan J."/>
            <person name="Rabert U."/>
            <person name="Voelkl A."/>
            <person name="Debuch H."/>
        </authorList>
    </citation>
    <scope>FUNCTION</scope>
    <scope>CATALYTIC ACTIVITY</scope>
    <scope>BIOPHYSICOCHEMICAL PROPERTIES</scope>
    <scope>SUBCELLULAR LOCATION</scope>
    <scope>ACTIVITY REGULATION</scope>
</reference>
<reference key="3">
    <citation type="journal article" date="1993" name="Biochim. Biophys. Acta">
        <title>Ether lipid synthesis: purification and identification of alkyl dihydroxyacetone phosphate synthase from guinea-pig liver.</title>
        <authorList>
            <person name="Zomer A.W."/>
            <person name="de Weerd W.F."/>
            <person name="Langeveld J."/>
            <person name="van den Bosch H."/>
        </authorList>
    </citation>
    <scope>FUNCTION</scope>
    <scope>CATALYTIC ACTIVITY</scope>
</reference>
<feature type="transit peptide" description="Peroxisome" evidence="1">
    <location>
        <begin position="1"/>
        <end position="44"/>
    </location>
</feature>
<feature type="chain" id="PRO_0000231677" description="Alkyldihydroxyacetonephosphate synthase, peroxisomal">
    <location>
        <begin position="45"/>
        <end position="644"/>
    </location>
</feature>
<feature type="domain" description="FAD-binding PCMH-type" evidence="5">
    <location>
        <begin position="188"/>
        <end position="370"/>
    </location>
</feature>
<feature type="region of interest" description="Disordered" evidence="6">
    <location>
        <begin position="1"/>
        <end position="70"/>
    </location>
</feature>
<feature type="region of interest" description="Important for enzyme activity" evidence="3">
    <location>
        <begin position="601"/>
        <end position="603"/>
    </location>
</feature>
<feature type="region of interest" description="Important for enzyme activity" evidence="3">
    <location>
        <begin position="640"/>
        <end position="644"/>
    </location>
</feature>
<feature type="compositionally biased region" description="Basic and acidic residues" evidence="6">
    <location>
        <begin position="10"/>
        <end position="19"/>
    </location>
</feature>
<feature type="compositionally biased region" description="Low complexity" evidence="6">
    <location>
        <begin position="49"/>
        <end position="64"/>
    </location>
</feature>
<feature type="active site" description="Proton donor/acceptor" evidence="3">
    <location>
        <position position="564"/>
    </location>
</feature>
<feature type="binding site" evidence="3">
    <location>
        <begin position="220"/>
        <end position="226"/>
    </location>
    <ligand>
        <name>FAD</name>
        <dbReference type="ChEBI" id="CHEBI:57692"/>
    </ligand>
</feature>
<feature type="binding site" evidence="3">
    <location>
        <begin position="289"/>
        <end position="295"/>
    </location>
    <ligand>
        <name>FAD</name>
        <dbReference type="ChEBI" id="CHEBI:57692"/>
    </ligand>
</feature>
<feature type="binding site" evidence="3">
    <location>
        <begin position="302"/>
        <end position="305"/>
    </location>
    <ligand>
        <name>FAD</name>
        <dbReference type="ChEBI" id="CHEBI:57692"/>
    </ligand>
</feature>
<feature type="binding site" evidence="3">
    <location>
        <begin position="354"/>
        <end position="360"/>
    </location>
    <ligand>
        <name>FAD</name>
        <dbReference type="ChEBI" id="CHEBI:57692"/>
    </ligand>
</feature>
<feature type="binding site" evidence="3">
    <location>
        <position position="501"/>
    </location>
    <ligand>
        <name>substrate</name>
    </ligand>
</feature>
<feature type="site" description="Important for enzyme activity" evidence="3">
    <location>
        <position position="405"/>
    </location>
</feature>
<feature type="modified residue" description="Phosphoserine" evidence="2">
    <location>
        <position position="51"/>
    </location>
</feature>
<feature type="modified residue" description="Phosphoserine" evidence="4">
    <location>
        <position position="56"/>
    </location>
</feature>
<feature type="modified residue" description="N6-acetyllysine" evidence="2">
    <location>
        <position position="88"/>
    </location>
</feature>
<feature type="modified residue" description="N6-acetyllysine" evidence="2">
    <location>
        <position position="333"/>
    </location>
</feature>
<gene>
    <name type="primary">Agps</name>
    <name type="synonym">Ads</name>
</gene>
<name>ADAS_RAT</name>
<sequence>MAEAAGEAGASERDPDAVRARRRLRVLSGHLLGRPQEAPSTNECKARRAASAAGASPAASPAAPESGTIPKKRQELMKWNGWGYNDSKFLLNKKGQVELTGKRYPLSGLALPTLKDWIQNTLGVNLEHKTTSKPSINPSEAPPSIVNEDFLQELKEAHISYSQDADDRVFRAHGHCLHEIFLLREGMFERIPDIVVWPTCHDDVVKIVNLACKYNLCIIPIGGGTSVSYGLMCPADETRTIISLDTSQMNRILWVDENNLTAHVEAGITGQDLERQLKESGYCTGHEPDSLEFSIVGGWISTRASGMKKNVYGNIEDLVVHMKMVTPRGVIEKSSQGPRMSTGPDIHHFIMGSEGTLGVITEATIKIRPTPEYQKYGSVAFPNFEQGVACLREIAKQRCAPASIRLMDNQQFQFGHALKPQVSSIFTSFLDGFKKFYITKFKGFDPNQISVATLLFEGDREKVLQHEKQVYDIAAKFGGLAAGEDNGQRGYLLTYVIAYMRDLGLEYYVVGESFETSAPWDRVIDLCRNVKERIRRECKERGVQFAPLSTCRVTQTYDAGACIYFYFAFNYRGISDPLTVFEQTEAAARDEILANGGSLSHHHGVGKLRKQWLKESISDVGFGMLKSVKDYVDPSNIFGNRNLL</sequence>
<accession>Q9EQR2</accession>
<keyword id="KW-0007">Acetylation</keyword>
<keyword id="KW-0274">FAD</keyword>
<keyword id="KW-0285">Flavoprotein</keyword>
<keyword id="KW-0444">Lipid biosynthesis</keyword>
<keyword id="KW-0443">Lipid metabolism</keyword>
<keyword id="KW-0472">Membrane</keyword>
<keyword id="KW-0576">Peroxisome</keyword>
<keyword id="KW-0597">Phosphoprotein</keyword>
<keyword id="KW-1185">Reference proteome</keyword>
<keyword id="KW-0808">Transferase</keyword>
<keyword id="KW-0809">Transit peptide</keyword>
<organism>
    <name type="scientific">Rattus norvegicus</name>
    <name type="common">Rat</name>
    <dbReference type="NCBI Taxonomy" id="10116"/>
    <lineage>
        <taxon>Eukaryota</taxon>
        <taxon>Metazoa</taxon>
        <taxon>Chordata</taxon>
        <taxon>Craniata</taxon>
        <taxon>Vertebrata</taxon>
        <taxon>Euteleostomi</taxon>
        <taxon>Mammalia</taxon>
        <taxon>Eutheria</taxon>
        <taxon>Euarchontoglires</taxon>
        <taxon>Glires</taxon>
        <taxon>Rodentia</taxon>
        <taxon>Myomorpha</taxon>
        <taxon>Muroidea</taxon>
        <taxon>Muridae</taxon>
        <taxon>Murinae</taxon>
        <taxon>Rattus</taxon>
    </lineage>
</organism>
<comment type="function">
    <text evidence="8">Catalyzes the exchange of the acyl chain in acyl-dihydroxyacetonephosphate (acyl-DHAP) for a long chain fatty alcohol, yielding the first ether linked intermediate, i.e. alkyl-dihydroxyacetonephosphate (alkyl-DHAP), in the pathway of ether lipid biosynthesis.</text>
</comment>
<comment type="catalytic activity">
    <reaction evidence="7 8">
        <text>a long chain fatty alcohol + a 1-acylglycerone 3-phosphate = a 1-O-alkylglycerone 3-phosphate + a long-chain fatty acid + H(+)</text>
        <dbReference type="Rhea" id="RHEA:36171"/>
        <dbReference type="ChEBI" id="CHEBI:15378"/>
        <dbReference type="ChEBI" id="CHEBI:17135"/>
        <dbReference type="ChEBI" id="CHEBI:57534"/>
        <dbReference type="ChEBI" id="CHEBI:57560"/>
        <dbReference type="ChEBI" id="CHEBI:73315"/>
        <dbReference type="EC" id="2.5.1.26"/>
    </reaction>
    <physiologicalReaction direction="left-to-right" evidence="10 11">
        <dbReference type="Rhea" id="RHEA:36172"/>
    </physiologicalReaction>
</comment>
<comment type="catalytic activity">
    <reaction evidence="3">
        <text>hexadecan-1-ol + 1-hexadecanoylglycerone 3-phosphate = 1-O-hexadecylglycerone 3-phosphate + hexadecanoate + H(+)</text>
        <dbReference type="Rhea" id="RHEA:40659"/>
        <dbReference type="ChEBI" id="CHEBI:7896"/>
        <dbReference type="ChEBI" id="CHEBI:15378"/>
        <dbReference type="ChEBI" id="CHEBI:16125"/>
        <dbReference type="ChEBI" id="CHEBI:58303"/>
        <dbReference type="ChEBI" id="CHEBI:77429"/>
    </reaction>
    <physiologicalReaction direction="left-to-right" evidence="3">
        <dbReference type="Rhea" id="RHEA:40660"/>
    </physiologicalReaction>
</comment>
<comment type="catalytic activity">
    <reaction evidence="4">
        <text>1-hexadecanoylglycerone 3-phosphate + a long-chain fatty acid = a 1-acylglycerone 3-phosphate + hexadecanoate</text>
        <dbReference type="Rhea" id="RHEA:40727"/>
        <dbReference type="ChEBI" id="CHEBI:7896"/>
        <dbReference type="ChEBI" id="CHEBI:57534"/>
        <dbReference type="ChEBI" id="CHEBI:57560"/>
        <dbReference type="ChEBI" id="CHEBI:58303"/>
    </reaction>
    <physiologicalReaction direction="left-to-right" evidence="4">
        <dbReference type="Rhea" id="RHEA:40728"/>
    </physiologicalReaction>
</comment>
<comment type="cofactor">
    <cofactor evidence="3">
        <name>FAD</name>
        <dbReference type="ChEBI" id="CHEBI:57692"/>
    </cofactor>
</comment>
<comment type="activity regulation">
    <text evidence="7">Inhibited by divalent cation Mg(2+).</text>
</comment>
<comment type="biophysicochemical properties">
    <kinetics>
        <KM evidence="7">44 uM for hexadecanol</KM>
        <KM evidence="7">38 uM for octadecenol</KM>
        <KM evidence="7">50 uM for palmitoylglycerone phosphate</KM>
    </kinetics>
    <phDependence>
        <text evidence="7">Optimum pH is 7.5.</text>
    </phDependence>
</comment>
<comment type="pathway">
    <text>Glycerolipid metabolism; ether lipid biosynthesis.</text>
</comment>
<comment type="subunit">
    <text evidence="3">Homodimer.</text>
</comment>
<comment type="subcellular location">
    <subcellularLocation>
        <location evidence="3">Peroxisome membrane</location>
    </subcellularLocation>
    <subcellularLocation>
        <location evidence="7">Peroxisome</location>
    </subcellularLocation>
</comment>
<comment type="similarity">
    <text evidence="9">Belongs to the FAD-binding oxidoreductase/transferase type 4 family.</text>
</comment>
<dbReference type="EC" id="2.5.1.26" evidence="7 8"/>
<dbReference type="EMBL" id="AF121052">
    <property type="protein sequence ID" value="AAG43235.1"/>
    <property type="molecule type" value="mRNA"/>
</dbReference>
<dbReference type="RefSeq" id="NP_445802.2">
    <property type="nucleotide sequence ID" value="NM_053350.2"/>
</dbReference>
<dbReference type="SMR" id="Q9EQR2"/>
<dbReference type="FunCoup" id="Q9EQR2">
    <property type="interactions" value="2912"/>
</dbReference>
<dbReference type="STRING" id="10116.ENSRNOP00000002111"/>
<dbReference type="GlyGen" id="Q9EQR2">
    <property type="glycosylation" value="1 site"/>
</dbReference>
<dbReference type="iPTMnet" id="Q9EQR2"/>
<dbReference type="PhosphoSitePlus" id="Q9EQR2"/>
<dbReference type="jPOST" id="Q9EQR2"/>
<dbReference type="PaxDb" id="10116-ENSRNOP00000002111"/>
<dbReference type="GeneID" id="84114"/>
<dbReference type="KEGG" id="rno:84114"/>
<dbReference type="AGR" id="RGD:620364"/>
<dbReference type="CTD" id="8540"/>
<dbReference type="RGD" id="620364">
    <property type="gene designation" value="Agps"/>
</dbReference>
<dbReference type="eggNOG" id="KOG1233">
    <property type="taxonomic scope" value="Eukaryota"/>
</dbReference>
<dbReference type="InParanoid" id="Q9EQR2"/>
<dbReference type="OrthoDB" id="22542at9989"/>
<dbReference type="PhylomeDB" id="Q9EQR2"/>
<dbReference type="Reactome" id="R-RNO-75896">
    <property type="pathway name" value="Plasmalogen biosynthesis"/>
</dbReference>
<dbReference type="Reactome" id="R-RNO-9033241">
    <property type="pathway name" value="Peroxisomal protein import"/>
</dbReference>
<dbReference type="UniPathway" id="UPA00781"/>
<dbReference type="PRO" id="PR:Q9EQR2"/>
<dbReference type="Proteomes" id="UP000002494">
    <property type="component" value="Unplaced"/>
</dbReference>
<dbReference type="GO" id="GO:0005778">
    <property type="term" value="C:peroxisomal membrane"/>
    <property type="evidence" value="ECO:0007669"/>
    <property type="project" value="UniProtKB-SubCell"/>
</dbReference>
<dbReference type="GO" id="GO:0005777">
    <property type="term" value="C:peroxisome"/>
    <property type="evidence" value="ECO:0000314"/>
    <property type="project" value="HGNC-UCL"/>
</dbReference>
<dbReference type="GO" id="GO:0008609">
    <property type="term" value="F:alkylglycerone-phosphate synthase activity"/>
    <property type="evidence" value="ECO:0000314"/>
    <property type="project" value="UniProtKB"/>
</dbReference>
<dbReference type="GO" id="GO:0071949">
    <property type="term" value="F:FAD binding"/>
    <property type="evidence" value="ECO:0000250"/>
    <property type="project" value="UniProtKB"/>
</dbReference>
<dbReference type="GO" id="GO:0008611">
    <property type="term" value="P:ether lipid biosynthetic process"/>
    <property type="evidence" value="ECO:0000250"/>
    <property type="project" value="UniProtKB"/>
</dbReference>
<dbReference type="GO" id="GO:0008610">
    <property type="term" value="P:lipid biosynthetic process"/>
    <property type="evidence" value="ECO:0000266"/>
    <property type="project" value="RGD"/>
</dbReference>
<dbReference type="FunFam" id="1.10.45.10:FF:000002">
    <property type="entry name" value="Alkylglycerone-phosphate synthase"/>
    <property type="match status" value="1"/>
</dbReference>
<dbReference type="FunFam" id="3.30.300.330:FF:000001">
    <property type="entry name" value="Alkylglycerone-phosphate synthase"/>
    <property type="match status" value="1"/>
</dbReference>
<dbReference type="FunFam" id="3.30.43.10:FF:000003">
    <property type="entry name" value="Alkylglycerone-phosphate synthase"/>
    <property type="match status" value="1"/>
</dbReference>
<dbReference type="FunFam" id="3.30.465.10:FF:000011">
    <property type="entry name" value="Alkylglycerone-phosphate synthase"/>
    <property type="match status" value="1"/>
</dbReference>
<dbReference type="FunFam" id="3.30.70.3450:FF:000001">
    <property type="entry name" value="Alkylglycerone-phosphate synthase"/>
    <property type="match status" value="1"/>
</dbReference>
<dbReference type="Gene3D" id="3.30.160.650">
    <property type="match status" value="1"/>
</dbReference>
<dbReference type="Gene3D" id="3.30.300.330">
    <property type="match status" value="1"/>
</dbReference>
<dbReference type="Gene3D" id="3.30.465.10">
    <property type="match status" value="1"/>
</dbReference>
<dbReference type="Gene3D" id="3.30.70.3450">
    <property type="match status" value="1"/>
</dbReference>
<dbReference type="Gene3D" id="3.30.43.10">
    <property type="entry name" value="Uridine Diphospho-n-acetylenolpyruvylglucosamine Reductase, domain 2"/>
    <property type="match status" value="1"/>
</dbReference>
<dbReference type="Gene3D" id="1.10.45.10">
    <property type="entry name" value="Vanillyl-alcohol Oxidase, Chain A, domain 4"/>
    <property type="match status" value="1"/>
</dbReference>
<dbReference type="InterPro" id="IPR025650">
    <property type="entry name" value="Alkyl-DHAP_Synthase"/>
</dbReference>
<dbReference type="InterPro" id="IPR004113">
    <property type="entry name" value="FAD-bd_oxidored_4_C"/>
</dbReference>
<dbReference type="InterPro" id="IPR016166">
    <property type="entry name" value="FAD-bd_PCMH"/>
</dbReference>
<dbReference type="InterPro" id="IPR036318">
    <property type="entry name" value="FAD-bd_PCMH-like_sf"/>
</dbReference>
<dbReference type="InterPro" id="IPR016167">
    <property type="entry name" value="FAD-bd_PCMH_sub1"/>
</dbReference>
<dbReference type="InterPro" id="IPR016169">
    <property type="entry name" value="FAD-bd_PCMH_sub2"/>
</dbReference>
<dbReference type="InterPro" id="IPR016164">
    <property type="entry name" value="FAD-linked_Oxase-like_C"/>
</dbReference>
<dbReference type="InterPro" id="IPR006094">
    <property type="entry name" value="Oxid_FAD_bind_N"/>
</dbReference>
<dbReference type="InterPro" id="IPR016171">
    <property type="entry name" value="Vanillyl_alc_oxidase_C-sub2"/>
</dbReference>
<dbReference type="PANTHER" id="PTHR46568">
    <property type="entry name" value="ALKYLDIHYDROXYACETONEPHOSPHATE SYNTHASE, PEROXISOMAL"/>
    <property type="match status" value="1"/>
</dbReference>
<dbReference type="PANTHER" id="PTHR46568:SF1">
    <property type="entry name" value="ALKYLDIHYDROXYACETONEPHOSPHATE SYNTHASE, PEROXISOMAL"/>
    <property type="match status" value="1"/>
</dbReference>
<dbReference type="Pfam" id="PF02913">
    <property type="entry name" value="FAD-oxidase_C"/>
    <property type="match status" value="1"/>
</dbReference>
<dbReference type="Pfam" id="PF01565">
    <property type="entry name" value="FAD_binding_4"/>
    <property type="match status" value="1"/>
</dbReference>
<dbReference type="SUPFAM" id="SSF56176">
    <property type="entry name" value="FAD-binding/transporter-associated domain-like"/>
    <property type="match status" value="1"/>
</dbReference>
<dbReference type="SUPFAM" id="SSF55103">
    <property type="entry name" value="FAD-linked oxidases, C-terminal domain"/>
    <property type="match status" value="1"/>
</dbReference>
<dbReference type="PROSITE" id="PS51387">
    <property type="entry name" value="FAD_PCMH"/>
    <property type="match status" value="1"/>
</dbReference>
<evidence type="ECO:0000250" key="1"/>
<evidence type="ECO:0000250" key="2">
    <source>
        <dbReference type="UniProtKB" id="O00116"/>
    </source>
</evidence>
<evidence type="ECO:0000250" key="3">
    <source>
        <dbReference type="UniProtKB" id="P97275"/>
    </source>
</evidence>
<evidence type="ECO:0000250" key="4">
    <source>
        <dbReference type="UniProtKB" id="Q8C0I1"/>
    </source>
</evidence>
<evidence type="ECO:0000255" key="5">
    <source>
        <dbReference type="PROSITE-ProRule" id="PRU00718"/>
    </source>
</evidence>
<evidence type="ECO:0000256" key="6">
    <source>
        <dbReference type="SAM" id="MobiDB-lite"/>
    </source>
</evidence>
<evidence type="ECO:0000269" key="7">
    <source>
    </source>
</evidence>
<evidence type="ECO:0000269" key="8">
    <source>
    </source>
</evidence>
<evidence type="ECO:0000305" key="9"/>
<evidence type="ECO:0000305" key="10">
    <source>
    </source>
</evidence>
<evidence type="ECO:0000305" key="11">
    <source>
    </source>
</evidence>